<reference key="1">
    <citation type="journal article" date="2008" name="PLoS Genet.">
        <title>Complete genome sequence of the N2-fixing broad host range endophyte Klebsiella pneumoniae 342 and virulence predictions verified in mice.</title>
        <authorList>
            <person name="Fouts D.E."/>
            <person name="Tyler H.L."/>
            <person name="DeBoy R.T."/>
            <person name="Daugherty S."/>
            <person name="Ren Q."/>
            <person name="Badger J.H."/>
            <person name="Durkin A.S."/>
            <person name="Huot H."/>
            <person name="Shrivastava S."/>
            <person name="Kothari S."/>
            <person name="Dodson R.J."/>
            <person name="Mohamoud Y."/>
            <person name="Khouri H."/>
            <person name="Roesch L.F.W."/>
            <person name="Krogfelt K.A."/>
            <person name="Struve C."/>
            <person name="Triplett E.W."/>
            <person name="Methe B.A."/>
        </authorList>
    </citation>
    <scope>NUCLEOTIDE SEQUENCE [LARGE SCALE GENOMIC DNA]</scope>
    <source>
        <strain>342</strain>
    </source>
</reference>
<reference key="2">
    <citation type="journal article" date="2014" name="Biochim. Biophys. Acta">
        <title>Localization-controlled specificity of FAD:threonine flavin transferases in Klebsiella pneumoniae and its implications for the mechanism of Na(+)-translocating NADH:quinone oxidoreductase.</title>
        <authorList>
            <person name="Bertsova Y.V."/>
            <person name="Kostyrko V.A."/>
            <person name="Baykov A.A."/>
            <person name="Bogachev A.V."/>
        </authorList>
    </citation>
    <scope>FUNCTION</scope>
    <scope>DISRUPTION PHENOTYPE</scope>
    <scope>SUBCELLULAR LOCATION</scope>
    <source>
        <strain>204</strain>
    </source>
</reference>
<proteinExistence type="inferred from homology"/>
<feature type="chain" id="PRO_0000430777" description="FAD:protein FMN transferase">
    <location>
        <begin position="1"/>
        <end position="316"/>
    </location>
</feature>
<feature type="binding site" evidence="3">
    <location>
        <position position="14"/>
    </location>
    <ligand>
        <name>FAD</name>
        <dbReference type="ChEBI" id="CHEBI:57692"/>
    </ligand>
</feature>
<feature type="binding site" evidence="3">
    <location>
        <begin position="88"/>
        <end position="90"/>
    </location>
    <ligand>
        <name>FAD</name>
        <dbReference type="ChEBI" id="CHEBI:57692"/>
    </ligand>
</feature>
<feature type="binding site" evidence="3">
    <location>
        <position position="146"/>
    </location>
    <ligand>
        <name>FAD</name>
        <dbReference type="ChEBI" id="CHEBI:57692"/>
    </ligand>
</feature>
<feature type="binding site" evidence="2">
    <location>
        <position position="149"/>
    </location>
    <ligand>
        <name>Mg(2+)</name>
        <dbReference type="ChEBI" id="CHEBI:18420"/>
    </ligand>
</feature>
<feature type="binding site" evidence="2">
    <location>
        <position position="152"/>
    </location>
    <ligand>
        <name>FAD</name>
        <dbReference type="ChEBI" id="CHEBI:57692"/>
    </ligand>
</feature>
<feature type="binding site" evidence="3">
    <location>
        <position position="231"/>
    </location>
    <ligand>
        <name>FAD</name>
        <dbReference type="ChEBI" id="CHEBI:57692"/>
    </ligand>
</feature>
<feature type="binding site" evidence="2">
    <location>
        <position position="257"/>
    </location>
    <ligand>
        <name>Mg(2+)</name>
        <dbReference type="ChEBI" id="CHEBI:18420"/>
    </ligand>
</feature>
<feature type="binding site" evidence="2">
    <location>
        <position position="261"/>
    </location>
    <ligand>
        <name>Mg(2+)</name>
        <dbReference type="ChEBI" id="CHEBI:18420"/>
    </ligand>
</feature>
<organism>
    <name type="scientific">Klebsiella pneumoniae (strain 342)</name>
    <dbReference type="NCBI Taxonomy" id="507522"/>
    <lineage>
        <taxon>Bacteria</taxon>
        <taxon>Pseudomonadati</taxon>
        <taxon>Pseudomonadota</taxon>
        <taxon>Gammaproteobacteria</taxon>
        <taxon>Enterobacterales</taxon>
        <taxon>Enterobacteriaceae</taxon>
        <taxon>Klebsiella/Raoultella group</taxon>
        <taxon>Klebsiella</taxon>
        <taxon>Klebsiella pneumoniae complex</taxon>
    </lineage>
</organism>
<dbReference type="EC" id="2.7.1.180" evidence="1"/>
<dbReference type="EMBL" id="CP000964">
    <property type="protein sequence ID" value="ACI08719.1"/>
    <property type="molecule type" value="Genomic_DNA"/>
</dbReference>
<dbReference type="SMR" id="B5XRA9"/>
<dbReference type="KEGG" id="kpe:KPK_2905"/>
<dbReference type="HOGENOM" id="CLU_044403_1_0_6"/>
<dbReference type="BRENDA" id="2.7.1.180">
    <property type="organism ID" value="2814"/>
</dbReference>
<dbReference type="Proteomes" id="UP000001734">
    <property type="component" value="Chromosome"/>
</dbReference>
<dbReference type="GO" id="GO:0005737">
    <property type="term" value="C:cytoplasm"/>
    <property type="evidence" value="ECO:0007669"/>
    <property type="project" value="UniProtKB-SubCell"/>
</dbReference>
<dbReference type="GO" id="GO:0046872">
    <property type="term" value="F:metal ion binding"/>
    <property type="evidence" value="ECO:0007669"/>
    <property type="project" value="UniProtKB-KW"/>
</dbReference>
<dbReference type="GO" id="GO:0016740">
    <property type="term" value="F:transferase activity"/>
    <property type="evidence" value="ECO:0007669"/>
    <property type="project" value="UniProtKB-KW"/>
</dbReference>
<dbReference type="Gene3D" id="3.10.520.10">
    <property type="entry name" value="ApbE-like domains"/>
    <property type="match status" value="1"/>
</dbReference>
<dbReference type="InterPro" id="IPR024932">
    <property type="entry name" value="ApbE"/>
</dbReference>
<dbReference type="InterPro" id="IPR003374">
    <property type="entry name" value="ApbE-like_sf"/>
</dbReference>
<dbReference type="PANTHER" id="PTHR30040:SF2">
    <property type="entry name" value="FAD:PROTEIN FMN TRANSFERASE"/>
    <property type="match status" value="1"/>
</dbReference>
<dbReference type="PANTHER" id="PTHR30040">
    <property type="entry name" value="THIAMINE BIOSYNTHESIS LIPOPROTEIN APBE"/>
    <property type="match status" value="1"/>
</dbReference>
<dbReference type="Pfam" id="PF02424">
    <property type="entry name" value="ApbE"/>
    <property type="match status" value="1"/>
</dbReference>
<dbReference type="PIRSF" id="PIRSF006268">
    <property type="entry name" value="ApbE"/>
    <property type="match status" value="1"/>
</dbReference>
<dbReference type="SUPFAM" id="SSF143631">
    <property type="entry name" value="ApbE-like"/>
    <property type="match status" value="1"/>
</dbReference>
<name>APBE2_KLEP3</name>
<protein>
    <recommendedName>
        <fullName evidence="1">FAD:protein FMN transferase</fullName>
        <ecNumber evidence="1">2.7.1.180</ecNumber>
    </recommendedName>
    <alternativeName>
        <fullName evidence="5">Flavin transferase</fullName>
    </alternativeName>
</protein>
<evidence type="ECO:0000250" key="1">
    <source>
        <dbReference type="UniProtKB" id="A5F5Y3"/>
    </source>
</evidence>
<evidence type="ECO:0000250" key="2">
    <source>
        <dbReference type="UniProtKB" id="O83774"/>
    </source>
</evidence>
<evidence type="ECO:0000250" key="3">
    <source>
        <dbReference type="UniProtKB" id="P41780"/>
    </source>
</evidence>
<evidence type="ECO:0000269" key="4">
    <source>
    </source>
</evidence>
<evidence type="ECO:0000303" key="5">
    <source>
    </source>
</evidence>
<evidence type="ECO:0000305" key="6"/>
<evidence type="ECO:0000312" key="7">
    <source>
        <dbReference type="EMBL" id="ACI08719.1"/>
    </source>
</evidence>
<sequence length="316" mass="35128">MSDNRVYSYSAVLMGSPILLKLYSHDEALASRVFQLIKRYEDLLTVNRAESQVMDINHAAGRHPVTVSRPVFQLIQCAKAASMVRDSAFNLAIGPLVKLWRIGFHGHSVPDAADIRARLALTRPQEVILDETTCSVFLQQPGMELDLGAIAKGYIADRVRDYLRQQQVEKALINLGGNVHTLGEWTIGLKKPFADAQALIGSLTINGQSVVTSGTYERYFEQDGKRWHHILDPRSGYPLDNELDSVTVISTDSLDGDIWTTLLFGLGVEKGCAALRQREDIDAIFVTKNRDIILSSPQRLRFSPLDSGYQVIDCTA</sequence>
<accession>B5XRA9</accession>
<gene>
    <name evidence="5" type="primary">apbE2</name>
    <name evidence="7" type="ordered locus">KPK_2905</name>
</gene>
<comment type="function">
    <text evidence="1 4">Flavin transferase that catalyzes the transfer of the FMN moiety of FAD and its covalent binding to the hydroxyl group of a threonine residue in a target flavoprotein. Is responsible for the modification of the fumarate reductase KPK_2907.</text>
</comment>
<comment type="catalytic activity">
    <reaction evidence="1">
        <text>L-threonyl-[protein] + FAD = FMN-L-threonyl-[protein] + AMP + H(+)</text>
        <dbReference type="Rhea" id="RHEA:36847"/>
        <dbReference type="Rhea" id="RHEA-COMP:11060"/>
        <dbReference type="Rhea" id="RHEA-COMP:11061"/>
        <dbReference type="ChEBI" id="CHEBI:15378"/>
        <dbReference type="ChEBI" id="CHEBI:30013"/>
        <dbReference type="ChEBI" id="CHEBI:57692"/>
        <dbReference type="ChEBI" id="CHEBI:74257"/>
        <dbReference type="ChEBI" id="CHEBI:456215"/>
        <dbReference type="EC" id="2.7.1.180"/>
    </reaction>
</comment>
<comment type="cofactor">
    <cofactor evidence="1">
        <name>Mg(2+)</name>
        <dbReference type="ChEBI" id="CHEBI:18420"/>
    </cofactor>
</comment>
<comment type="subcellular location">
    <subcellularLocation>
        <location evidence="4">Cytoplasm</location>
    </subcellularLocation>
</comment>
<comment type="disruption phenotype">
    <text evidence="4">Inactivation of this gene results in a complete loss of the fumarate reductase activity displayed by KPK_2907, which contains a covalently bound FMN, but does not affect the Na(+)-NQR activity.</text>
</comment>
<comment type="similarity">
    <text evidence="6">Belongs to the ApbE family.</text>
</comment>
<keyword id="KW-0963">Cytoplasm</keyword>
<keyword id="KW-0274">FAD</keyword>
<keyword id="KW-0285">Flavoprotein</keyword>
<keyword id="KW-0460">Magnesium</keyword>
<keyword id="KW-0479">Metal-binding</keyword>
<keyword id="KW-0808">Transferase</keyword>